<gene>
    <name type="ORF">I ORF A</name>
</gene>
<reference key="1">
    <citation type="journal article" date="1990" name="Virology">
        <title>The complete DNA sequence of vaccinia virus.</title>
        <authorList>
            <person name="Goebel S.J."/>
            <person name="Johnson G.P."/>
            <person name="Perkus M.E."/>
            <person name="Davis S.W."/>
            <person name="Winslow J.P."/>
            <person name="Paoletti E."/>
        </authorList>
    </citation>
    <scope>NUCLEOTIDE SEQUENCE [LARGE SCALE GENOMIC DNA]</scope>
</reference>
<reference key="2">
    <citation type="journal article" date="1990" name="Virology">
        <title>Appendix to 'The complete DNA sequence of vaccinia virus'.</title>
        <authorList>
            <person name="Goebel S.J."/>
            <person name="Johnson G.P."/>
            <person name="Perkus M.E."/>
            <person name="Davis S.W."/>
            <person name="Winslow J.P."/>
            <person name="Paoletti E."/>
        </authorList>
    </citation>
    <scope>COMPLETE GENOME</scope>
</reference>
<protein>
    <recommendedName>
        <fullName>Uncharacterized 9.3 kDa protein</fullName>
    </recommendedName>
</protein>
<accession>P20568</accession>
<dbReference type="EMBL" id="M35027">
    <property type="protein sequence ID" value="AAA48060.1"/>
    <property type="molecule type" value="Genomic_DNA"/>
</dbReference>
<dbReference type="PIR" id="E42511">
    <property type="entry name" value="E42511"/>
</dbReference>
<dbReference type="Proteomes" id="UP000008269">
    <property type="component" value="Segment"/>
</dbReference>
<keyword id="KW-1185">Reference proteome</keyword>
<proteinExistence type="predicted"/>
<feature type="chain" id="PRO_0000099720" description="Uncharacterized 9.3 kDa protein">
    <location>
        <begin position="1"/>
        <end position="77"/>
    </location>
</feature>
<organism>
    <name type="scientific">Vaccinia virus (strain Copenhagen)</name>
    <name type="common">VACV</name>
    <dbReference type="NCBI Taxonomy" id="10249"/>
    <lineage>
        <taxon>Viruses</taxon>
        <taxon>Varidnaviria</taxon>
        <taxon>Bamfordvirae</taxon>
        <taxon>Nucleocytoviricota</taxon>
        <taxon>Pokkesviricetes</taxon>
        <taxon>Chitovirales</taxon>
        <taxon>Poxviridae</taxon>
        <taxon>Chordopoxvirinae</taxon>
        <taxon>Orthopoxvirus</taxon>
        <taxon>Vaccinia virus</taxon>
    </lineage>
</organism>
<sequence length="77" mass="9274">MSLIRDFSFWNRIIINIYNFIEISDNYFDHILQFEKIKSPIYYKHVQGNRCQITNGYLISIRILYYLSAKITTLDSS</sequence>
<name>YVIA_VACCC</name>
<organismHost>
    <name type="scientific">Homo sapiens</name>
    <name type="common">Human</name>
    <dbReference type="NCBI Taxonomy" id="9606"/>
</organismHost>